<organism>
    <name type="scientific">Methanocaldococcus jannaschii (strain ATCC 43067 / DSM 2661 / JAL-1 / JCM 10045 / NBRC 100440)</name>
    <name type="common">Methanococcus jannaschii</name>
    <dbReference type="NCBI Taxonomy" id="243232"/>
    <lineage>
        <taxon>Archaea</taxon>
        <taxon>Methanobacteriati</taxon>
        <taxon>Methanobacteriota</taxon>
        <taxon>Methanomada group</taxon>
        <taxon>Methanococci</taxon>
        <taxon>Methanococcales</taxon>
        <taxon>Methanocaldococcaceae</taxon>
        <taxon>Methanocaldococcus</taxon>
    </lineage>
</organism>
<gene>
    <name type="ordered locus">MJ0287</name>
</gene>
<feature type="chain" id="PRO_0000106774" description="Uncharacterized protein MJ0287">
    <location>
        <begin position="1"/>
        <end position="97"/>
    </location>
</feature>
<reference key="1">
    <citation type="journal article" date="1996" name="Science">
        <title>Complete genome sequence of the methanogenic archaeon, Methanococcus jannaschii.</title>
        <authorList>
            <person name="Bult C.J."/>
            <person name="White O."/>
            <person name="Olsen G.J."/>
            <person name="Zhou L."/>
            <person name="Fleischmann R.D."/>
            <person name="Sutton G.G."/>
            <person name="Blake J.A."/>
            <person name="FitzGerald L.M."/>
            <person name="Clayton R.A."/>
            <person name="Gocayne J.D."/>
            <person name="Kerlavage A.R."/>
            <person name="Dougherty B.A."/>
            <person name="Tomb J.-F."/>
            <person name="Adams M.D."/>
            <person name="Reich C.I."/>
            <person name="Overbeek R."/>
            <person name="Kirkness E.F."/>
            <person name="Weinstock K.G."/>
            <person name="Merrick J.M."/>
            <person name="Glodek A."/>
            <person name="Scott J.L."/>
            <person name="Geoghagen N.S.M."/>
            <person name="Weidman J.F."/>
            <person name="Fuhrmann J.L."/>
            <person name="Nguyen D."/>
            <person name="Utterback T.R."/>
            <person name="Kelley J.M."/>
            <person name="Peterson J.D."/>
            <person name="Sadow P.W."/>
            <person name="Hanna M.C."/>
            <person name="Cotton M.D."/>
            <person name="Roberts K.M."/>
            <person name="Hurst M.A."/>
            <person name="Kaine B.P."/>
            <person name="Borodovsky M."/>
            <person name="Klenk H.-P."/>
            <person name="Fraser C.M."/>
            <person name="Smith H.O."/>
            <person name="Woese C.R."/>
            <person name="Venter J.C."/>
        </authorList>
    </citation>
    <scope>NUCLEOTIDE SEQUENCE [LARGE SCALE GENOMIC DNA]</scope>
    <source>
        <strain>ATCC 43067 / DSM 2661 / JAL-1 / JCM 10045 / NBRC 100440</strain>
    </source>
</reference>
<accession>Q57735</accession>
<sequence length="97" mass="11764">MRIPPPLSNNKNRNRRYKRSQFEVIFEILHIIKEGEQIKTRIMYAANLDWRNFSKYIDFLISNGFIKKNKEKFELTELGKKLYSSLYELFEIMNSKP</sequence>
<proteinExistence type="predicted"/>
<keyword id="KW-1185">Reference proteome</keyword>
<dbReference type="EMBL" id="L77117">
    <property type="protein sequence ID" value="AAB98274.1"/>
    <property type="molecule type" value="Genomic_DNA"/>
</dbReference>
<dbReference type="PIR" id="H64335">
    <property type="entry name" value="H64335"/>
</dbReference>
<dbReference type="RefSeq" id="WP_010869785.1">
    <property type="nucleotide sequence ID" value="NC_000909.1"/>
</dbReference>
<dbReference type="SMR" id="Q57735"/>
<dbReference type="STRING" id="243232.MJ_0287"/>
<dbReference type="PaxDb" id="243232-MJ_0287"/>
<dbReference type="EnsemblBacteria" id="AAB98274">
    <property type="protein sequence ID" value="AAB98274"/>
    <property type="gene ID" value="MJ_0287"/>
</dbReference>
<dbReference type="GeneID" id="1451142"/>
<dbReference type="KEGG" id="mja:MJ_0287"/>
<dbReference type="eggNOG" id="arCOG01055">
    <property type="taxonomic scope" value="Archaea"/>
</dbReference>
<dbReference type="HOGENOM" id="CLU_159725_2_1_2"/>
<dbReference type="InParanoid" id="Q57735"/>
<dbReference type="OrthoDB" id="65512at2157"/>
<dbReference type="PhylomeDB" id="Q57735"/>
<dbReference type="Proteomes" id="UP000000805">
    <property type="component" value="Chromosome"/>
</dbReference>
<dbReference type="Gene3D" id="1.10.10.10">
    <property type="entry name" value="Winged helix-like DNA-binding domain superfamily/Winged helix DNA-binding domain"/>
    <property type="match status" value="1"/>
</dbReference>
<dbReference type="InterPro" id="IPR038723">
    <property type="entry name" value="ArnR1-like_HTH"/>
</dbReference>
<dbReference type="InterPro" id="IPR036388">
    <property type="entry name" value="WH-like_DNA-bd_sf"/>
</dbReference>
<dbReference type="InterPro" id="IPR036390">
    <property type="entry name" value="WH_DNA-bd_sf"/>
</dbReference>
<dbReference type="Pfam" id="PF14947">
    <property type="entry name" value="HTH_45"/>
    <property type="match status" value="1"/>
</dbReference>
<dbReference type="SUPFAM" id="SSF46785">
    <property type="entry name" value="Winged helix' DNA-binding domain"/>
    <property type="match status" value="1"/>
</dbReference>
<name>Y287_METJA</name>
<protein>
    <recommendedName>
        <fullName>Uncharacterized protein MJ0287</fullName>
    </recommendedName>
</protein>